<organism>
    <name type="scientific">Ligilactobacillus salivarius (strain UCC118)</name>
    <name type="common">Lactobacillus salivarius</name>
    <dbReference type="NCBI Taxonomy" id="362948"/>
    <lineage>
        <taxon>Bacteria</taxon>
        <taxon>Bacillati</taxon>
        <taxon>Bacillota</taxon>
        <taxon>Bacilli</taxon>
        <taxon>Lactobacillales</taxon>
        <taxon>Lactobacillaceae</taxon>
        <taxon>Ligilactobacillus</taxon>
    </lineage>
</organism>
<proteinExistence type="inferred from homology"/>
<reference key="1">
    <citation type="journal article" date="2006" name="Proc. Natl. Acad. Sci. U.S.A.">
        <title>Multireplicon genome architecture of Lactobacillus salivarius.</title>
        <authorList>
            <person name="Claesson M.J."/>
            <person name="Li Y."/>
            <person name="Leahy S."/>
            <person name="Canchaya C."/>
            <person name="van Pijkeren J.P."/>
            <person name="Cerdeno-Tarraga A.M."/>
            <person name="Parkhill J."/>
            <person name="Flynn S."/>
            <person name="O'Sullivan G.C."/>
            <person name="Collins J.K."/>
            <person name="Higgins D."/>
            <person name="Shanahan F."/>
            <person name="Fitzgerald G.F."/>
            <person name="van Sinderen D."/>
            <person name="O'Toole P.W."/>
        </authorList>
    </citation>
    <scope>NUCLEOTIDE SEQUENCE [LARGE SCALE GENOMIC DNA]</scope>
    <source>
        <strain>UCC118</strain>
    </source>
</reference>
<name>RL14_LIGS1</name>
<accession>Q1WSA0</accession>
<comment type="function">
    <text evidence="1">Binds to 23S rRNA. Forms part of two intersubunit bridges in the 70S ribosome.</text>
</comment>
<comment type="subunit">
    <text evidence="1">Part of the 50S ribosomal subunit. Forms a cluster with proteins L3 and L19. In the 70S ribosome, L14 and L19 interact and together make contacts with the 16S rRNA in bridges B5 and B8.</text>
</comment>
<comment type="similarity">
    <text evidence="1">Belongs to the universal ribosomal protein uL14 family.</text>
</comment>
<sequence>MIQQESRLKVADNSGAREILVIKILGGSRVKTANIGDIIVATVKQATPGGVVKKGDVVKAVVVRTKYGTHRPDGSYIKFDENAAVIIGEDKSPKGTRIFGPVARELRDGNFMKIVSLAPEVL</sequence>
<evidence type="ECO:0000255" key="1">
    <source>
        <dbReference type="HAMAP-Rule" id="MF_01367"/>
    </source>
</evidence>
<evidence type="ECO:0000305" key="2"/>
<feature type="chain" id="PRO_1000055612" description="Large ribosomal subunit protein uL14">
    <location>
        <begin position="1"/>
        <end position="122"/>
    </location>
</feature>
<protein>
    <recommendedName>
        <fullName evidence="1">Large ribosomal subunit protein uL14</fullName>
    </recommendedName>
    <alternativeName>
        <fullName evidence="2">50S ribosomal protein L14</fullName>
    </alternativeName>
</protein>
<dbReference type="EMBL" id="CP000233">
    <property type="protein sequence ID" value="ABE00229.1"/>
    <property type="molecule type" value="Genomic_DNA"/>
</dbReference>
<dbReference type="RefSeq" id="WP_003701315.1">
    <property type="nucleotide sequence ID" value="NC_007929.1"/>
</dbReference>
<dbReference type="RefSeq" id="YP_536312.1">
    <property type="nucleotide sequence ID" value="NC_007929.1"/>
</dbReference>
<dbReference type="SMR" id="Q1WSA0"/>
<dbReference type="STRING" id="362948.LSL_1425"/>
<dbReference type="GeneID" id="89466160"/>
<dbReference type="KEGG" id="lsl:LSL_1425"/>
<dbReference type="PATRIC" id="fig|362948.14.peg.1508"/>
<dbReference type="HOGENOM" id="CLU_095071_2_1_9"/>
<dbReference type="OrthoDB" id="9806379at2"/>
<dbReference type="Proteomes" id="UP000006559">
    <property type="component" value="Chromosome"/>
</dbReference>
<dbReference type="GO" id="GO:0022625">
    <property type="term" value="C:cytosolic large ribosomal subunit"/>
    <property type="evidence" value="ECO:0007669"/>
    <property type="project" value="TreeGrafter"/>
</dbReference>
<dbReference type="GO" id="GO:0070180">
    <property type="term" value="F:large ribosomal subunit rRNA binding"/>
    <property type="evidence" value="ECO:0007669"/>
    <property type="project" value="TreeGrafter"/>
</dbReference>
<dbReference type="GO" id="GO:0003735">
    <property type="term" value="F:structural constituent of ribosome"/>
    <property type="evidence" value="ECO:0007669"/>
    <property type="project" value="InterPro"/>
</dbReference>
<dbReference type="GO" id="GO:0006412">
    <property type="term" value="P:translation"/>
    <property type="evidence" value="ECO:0007669"/>
    <property type="project" value="UniProtKB-UniRule"/>
</dbReference>
<dbReference type="CDD" id="cd00337">
    <property type="entry name" value="Ribosomal_uL14"/>
    <property type="match status" value="1"/>
</dbReference>
<dbReference type="FunFam" id="2.40.150.20:FF:000001">
    <property type="entry name" value="50S ribosomal protein L14"/>
    <property type="match status" value="1"/>
</dbReference>
<dbReference type="Gene3D" id="2.40.150.20">
    <property type="entry name" value="Ribosomal protein L14"/>
    <property type="match status" value="1"/>
</dbReference>
<dbReference type="HAMAP" id="MF_01367">
    <property type="entry name" value="Ribosomal_uL14"/>
    <property type="match status" value="1"/>
</dbReference>
<dbReference type="InterPro" id="IPR000218">
    <property type="entry name" value="Ribosomal_uL14"/>
</dbReference>
<dbReference type="InterPro" id="IPR005745">
    <property type="entry name" value="Ribosomal_uL14_bac-type"/>
</dbReference>
<dbReference type="InterPro" id="IPR019972">
    <property type="entry name" value="Ribosomal_uL14_CS"/>
</dbReference>
<dbReference type="InterPro" id="IPR036853">
    <property type="entry name" value="Ribosomal_uL14_sf"/>
</dbReference>
<dbReference type="NCBIfam" id="TIGR01067">
    <property type="entry name" value="rplN_bact"/>
    <property type="match status" value="1"/>
</dbReference>
<dbReference type="PANTHER" id="PTHR11761">
    <property type="entry name" value="50S/60S RIBOSOMAL PROTEIN L14/L23"/>
    <property type="match status" value="1"/>
</dbReference>
<dbReference type="PANTHER" id="PTHR11761:SF3">
    <property type="entry name" value="LARGE RIBOSOMAL SUBUNIT PROTEIN UL14M"/>
    <property type="match status" value="1"/>
</dbReference>
<dbReference type="Pfam" id="PF00238">
    <property type="entry name" value="Ribosomal_L14"/>
    <property type="match status" value="1"/>
</dbReference>
<dbReference type="SMART" id="SM01374">
    <property type="entry name" value="Ribosomal_L14"/>
    <property type="match status" value="1"/>
</dbReference>
<dbReference type="SUPFAM" id="SSF50193">
    <property type="entry name" value="Ribosomal protein L14"/>
    <property type="match status" value="1"/>
</dbReference>
<dbReference type="PROSITE" id="PS00049">
    <property type="entry name" value="RIBOSOMAL_L14"/>
    <property type="match status" value="1"/>
</dbReference>
<gene>
    <name evidence="1" type="primary">rplN</name>
    <name type="ordered locus">LSL_1425</name>
</gene>
<keyword id="KW-1185">Reference proteome</keyword>
<keyword id="KW-0687">Ribonucleoprotein</keyword>
<keyword id="KW-0689">Ribosomal protein</keyword>
<keyword id="KW-0694">RNA-binding</keyword>
<keyword id="KW-0699">rRNA-binding</keyword>